<gene>
    <name evidence="6" type="primary">BLD10</name>
    <name evidence="10" type="ORF">CHLRE_10g418250v5</name>
</gene>
<proteinExistence type="evidence at protein level"/>
<accession>A8ID55</accession>
<accession>Q764P7</accession>
<evidence type="ECO:0000250" key="1">
    <source>
        <dbReference type="UniProtKB" id="Q66GS9"/>
    </source>
</evidence>
<evidence type="ECO:0000255" key="2"/>
<evidence type="ECO:0000256" key="3">
    <source>
        <dbReference type="SAM" id="MobiDB-lite"/>
    </source>
</evidence>
<evidence type="ECO:0000269" key="4">
    <source>
    </source>
</evidence>
<evidence type="ECO:0000269" key="5">
    <source>
    </source>
</evidence>
<evidence type="ECO:0000303" key="6">
    <source>
    </source>
</evidence>
<evidence type="ECO:0000303" key="7">
    <source>
    </source>
</evidence>
<evidence type="ECO:0000305" key="8"/>
<evidence type="ECO:0000305" key="9">
    <source>
    </source>
</evidence>
<evidence type="ECO:0000312" key="10">
    <source>
        <dbReference type="EMBL" id="PNW77000.1"/>
    </source>
</evidence>
<evidence type="ECO:0007744" key="11">
    <source>
        <dbReference type="PDB" id="5FCM"/>
    </source>
</evidence>
<evidence type="ECO:0007829" key="12">
    <source>
        <dbReference type="PDB" id="5FCM"/>
    </source>
</evidence>
<protein>
    <recommendedName>
        <fullName evidence="6">Basal body protein 10</fullName>
        <shortName evidence="6 7">CrBld10p</shortName>
    </recommendedName>
</protein>
<organism>
    <name type="scientific">Chlamydomonas reinhardtii</name>
    <name type="common">Chlamydomonas smithii</name>
    <dbReference type="NCBI Taxonomy" id="3055"/>
    <lineage>
        <taxon>Eukaryota</taxon>
        <taxon>Viridiplantae</taxon>
        <taxon>Chlorophyta</taxon>
        <taxon>core chlorophytes</taxon>
        <taxon>Chlorophyceae</taxon>
        <taxon>CS clade</taxon>
        <taxon>Chlamydomonadales</taxon>
        <taxon>Chlamydomonadaceae</taxon>
        <taxon>Chlamydomonas</taxon>
    </lineage>
</organism>
<keyword id="KW-0002">3D-structure</keyword>
<keyword id="KW-0175">Coiled coil</keyword>
<keyword id="KW-0963">Cytoplasm</keyword>
<keyword id="KW-0206">Cytoskeleton</keyword>
<keyword id="KW-0493">Microtubule</keyword>
<keyword id="KW-1185">Reference proteome</keyword>
<reference key="1">
    <citation type="journal article" date="2004" name="J. Cell Biol.">
        <title>Bld10p, a novel protein essential for basal body assembly in Chlamydomonas: localization to the cartwheel, the first ninefold symmetrical structure appearing during assembly.</title>
        <authorList>
            <person name="Matsuura K."/>
            <person name="Lefebvre P.A."/>
            <person name="Kamiya R."/>
            <person name="Hirono M."/>
        </authorList>
    </citation>
    <scope>NUCLEOTIDE SEQUENCE [GENOMIC DNA]</scope>
    <scope>FUNCTION</scope>
    <scope>DISRUPTION PHENOTYPE</scope>
    <scope>SUBCELLULAR LOCATION</scope>
</reference>
<reference key="2">
    <citation type="journal article" date="2007" name="Science">
        <title>The Chlamydomonas genome reveals the evolution of key animal and plant functions.</title>
        <authorList>
            <person name="Merchant S.S."/>
            <person name="Prochnik S.E."/>
            <person name="Vallon O."/>
            <person name="Harris E.H."/>
            <person name="Karpowicz S.J."/>
            <person name="Witman G.B."/>
            <person name="Terry A."/>
            <person name="Salamov A."/>
            <person name="Fritz-Laylin L.K."/>
            <person name="Marechal-Drouard L."/>
            <person name="Marshall W.F."/>
            <person name="Qu L.H."/>
            <person name="Nelson D.R."/>
            <person name="Sanderfoot A.A."/>
            <person name="Spalding M.H."/>
            <person name="Kapitonov V.V."/>
            <person name="Ren Q."/>
            <person name="Ferris P."/>
            <person name="Lindquist E."/>
            <person name="Shapiro H."/>
            <person name="Lucas S.M."/>
            <person name="Grimwood J."/>
            <person name="Schmutz J."/>
            <person name="Cardol P."/>
            <person name="Cerutti H."/>
            <person name="Chanfreau G."/>
            <person name="Chen C.L."/>
            <person name="Cognat V."/>
            <person name="Croft M.T."/>
            <person name="Dent R."/>
            <person name="Dutcher S."/>
            <person name="Fernandez E."/>
            <person name="Fukuzawa H."/>
            <person name="Gonzalez-Ballester D."/>
            <person name="Gonzalez-Halphen D."/>
            <person name="Hallmann A."/>
            <person name="Hanikenne M."/>
            <person name="Hippler M."/>
            <person name="Inwood W."/>
            <person name="Jabbari K."/>
            <person name="Kalanon M."/>
            <person name="Kuras R."/>
            <person name="Lefebvre P.A."/>
            <person name="Lemaire S.D."/>
            <person name="Lobanov A.V."/>
            <person name="Lohr M."/>
            <person name="Manuell A."/>
            <person name="Meier I."/>
            <person name="Mets L."/>
            <person name="Mittag M."/>
            <person name="Mittelmeier T."/>
            <person name="Moroney J.V."/>
            <person name="Moseley J."/>
            <person name="Napoli C."/>
            <person name="Nedelcu A.M."/>
            <person name="Niyogi K."/>
            <person name="Novoselov S.V."/>
            <person name="Paulsen I.T."/>
            <person name="Pazour G.J."/>
            <person name="Purton S."/>
            <person name="Ral J.P."/>
            <person name="Riano-Pachon D.M."/>
            <person name="Riekhof W."/>
            <person name="Rymarquis L."/>
            <person name="Schroda M."/>
            <person name="Stern D."/>
            <person name="Umen J."/>
            <person name="Willows R."/>
            <person name="Wilson N."/>
            <person name="Zimmer S.L."/>
            <person name="Allmer J."/>
            <person name="Balk J."/>
            <person name="Bisova K."/>
            <person name="Chen C.J."/>
            <person name="Elias M."/>
            <person name="Gendler K."/>
            <person name="Hauser C."/>
            <person name="Lamb M.R."/>
            <person name="Ledford H."/>
            <person name="Long J.C."/>
            <person name="Minagawa J."/>
            <person name="Page M.D."/>
            <person name="Pan J."/>
            <person name="Pootakham W."/>
            <person name="Roje S."/>
            <person name="Rose A."/>
            <person name="Stahlberg E."/>
            <person name="Terauchi A.M."/>
            <person name="Yang P."/>
            <person name="Ball S."/>
            <person name="Bowler C."/>
            <person name="Dieckmann C.L."/>
            <person name="Gladyshev V.N."/>
            <person name="Green P."/>
            <person name="Jorgensen R."/>
            <person name="Mayfield S."/>
            <person name="Mueller-Roeber B."/>
            <person name="Rajamani S."/>
            <person name="Sayre R.T."/>
            <person name="Brokstein P."/>
            <person name="Dubchak I."/>
            <person name="Goodstein D."/>
            <person name="Hornick L."/>
            <person name="Huang Y.W."/>
            <person name="Jhaveri J."/>
            <person name="Luo Y."/>
            <person name="Martinez D."/>
            <person name="Ngau W.C."/>
            <person name="Otillar B."/>
            <person name="Poliakov A."/>
            <person name="Porter A."/>
            <person name="Szajkowski L."/>
            <person name="Werner G."/>
            <person name="Zhou K."/>
            <person name="Grigoriev I.V."/>
            <person name="Rokhsar D.S."/>
            <person name="Grossman A.R."/>
        </authorList>
    </citation>
    <scope>NUCLEOTIDE SEQUENCE [LARGE SCALE GENOMIC DNA]</scope>
    <source>
        <strain>CC-503</strain>
    </source>
</reference>
<reference key="3">
    <citation type="journal article" date="2016" name="Structure">
        <title>The Human centriolar protein CEP135 contains a two-stranded coiled-coil domain critical for microtubule binding.</title>
        <authorList>
            <person name="Kraatz S."/>
            <person name="Guichard P."/>
            <person name="Obbineni J.M."/>
            <person name="Olieric N."/>
            <person name="Hatzopoulos G.N."/>
            <person name="Hilbert M."/>
            <person name="Sen I."/>
            <person name="Missimer J."/>
            <person name="Gonczy P."/>
            <person name="Steinmetz M.O."/>
        </authorList>
    </citation>
    <scope>X-RAY CRYSTALLOGRAPHY (2.23 ANGSTROMS) OF 1-70 IN HOMODIMER</scope>
    <scope>FUNCTION</scope>
    <scope>DOMAIN</scope>
</reference>
<comment type="function">
    <text evidence="4 5">Microtubule-binding protein essential for cytoskeletal organization (e.g. rootlet microtubule bundles) and flagellar basal body/centriole assembly.</text>
</comment>
<comment type="subunit">
    <text evidence="5">Homodimer.</text>
</comment>
<comment type="subcellular location">
    <subcellularLocation>
        <location evidence="4">Cytoplasm</location>
        <location evidence="4">Cytoskeleton</location>
        <location evidence="4">Microtubule organizing center</location>
        <location evidence="4">Centrosome</location>
        <location evidence="4">Centriole</location>
    </subcellularLocation>
    <text evidence="4">Localized at the cartwheel, the first ninefold symmetrical structure appearing during basal body/centriole assembly near the proximal end of the organelle.</text>
</comment>
<comment type="domain">
    <text evidence="5">Coiled-coil domains are critical for microtubule binding via the formation of a two-stranded coiled-coil structure in homodimers.</text>
</comment>
<comment type="disruption phenotype">
    <text evidence="4">Basal body-defective and flagella-less phenotypes due to disorganized mitotic spindles, reduced rootlet microtubule bundles and cytoplasmic microtubules, and associated with abnormal cell division and slow growth (PubMed:15173189). Heterogeneous cell size as a result of unequal mitotic cell division (PubMed:15173189).</text>
</comment>
<comment type="similarity">
    <text evidence="8">Belongs to the CEP135/TSGA10 family.</text>
</comment>
<dbReference type="EMBL" id="AB116368">
    <property type="protein sequence ID" value="BAD00740.2"/>
    <property type="molecule type" value="Genomic_DNA"/>
</dbReference>
<dbReference type="EMBL" id="CM008971">
    <property type="protein sequence ID" value="PNW77000.1"/>
    <property type="molecule type" value="Genomic_DNA"/>
</dbReference>
<dbReference type="RefSeq" id="XP_001702637.1">
    <property type="nucleotide sequence ID" value="XM_001702585.1"/>
</dbReference>
<dbReference type="PDB" id="5FCM">
    <property type="method" value="X-ray"/>
    <property type="resolution" value="2.23 A"/>
    <property type="chains" value="A/B/C/D=1-70"/>
</dbReference>
<dbReference type="PDBsum" id="5FCM"/>
<dbReference type="SMR" id="A8ID55"/>
<dbReference type="STRING" id="3055.A8ID55"/>
<dbReference type="PaxDb" id="3055-EDP06416"/>
<dbReference type="EnsemblPlants" id="PNW77000">
    <property type="protein sequence ID" value="PNW77000"/>
    <property type="gene ID" value="CHLRE_10g418250v5"/>
</dbReference>
<dbReference type="GeneID" id="5728330"/>
<dbReference type="Gramene" id="PNW77000">
    <property type="protein sequence ID" value="PNW77000"/>
    <property type="gene ID" value="CHLRE_10g418250v5"/>
</dbReference>
<dbReference type="KEGG" id="cre:CHLRE_10g418250v5"/>
<dbReference type="eggNOG" id="ENOG502QT27">
    <property type="taxonomic scope" value="Eukaryota"/>
</dbReference>
<dbReference type="HOGENOM" id="CLU_242867_0_0_1"/>
<dbReference type="InParanoid" id="A8ID55"/>
<dbReference type="OMA" id="RFQLNEM"/>
<dbReference type="OrthoDB" id="543507at2759"/>
<dbReference type="Proteomes" id="UP000006906">
    <property type="component" value="Chromosome 10"/>
</dbReference>
<dbReference type="ExpressionAtlas" id="A8ID55">
    <property type="expression patterns" value="baseline and differential"/>
</dbReference>
<dbReference type="GO" id="GO:0005814">
    <property type="term" value="C:centriole"/>
    <property type="evidence" value="ECO:0000314"/>
    <property type="project" value="UniProtKB"/>
</dbReference>
<dbReference type="GO" id="GO:0036064">
    <property type="term" value="C:ciliary basal body"/>
    <property type="evidence" value="ECO:0000314"/>
    <property type="project" value="UniProtKB"/>
</dbReference>
<dbReference type="GO" id="GO:0120280">
    <property type="term" value="C:ciliary pro-basal body"/>
    <property type="evidence" value="ECO:0000314"/>
    <property type="project" value="UniProtKB"/>
</dbReference>
<dbReference type="GO" id="GO:0005737">
    <property type="term" value="C:cytoplasm"/>
    <property type="evidence" value="ECO:0007669"/>
    <property type="project" value="UniProtKB-KW"/>
</dbReference>
<dbReference type="GO" id="GO:0005874">
    <property type="term" value="C:microtubule"/>
    <property type="evidence" value="ECO:0007669"/>
    <property type="project" value="UniProtKB-KW"/>
</dbReference>
<dbReference type="GO" id="GO:0042802">
    <property type="term" value="F:identical protein binding"/>
    <property type="evidence" value="ECO:0000314"/>
    <property type="project" value="UniProtKB"/>
</dbReference>
<dbReference type="GO" id="GO:0008017">
    <property type="term" value="F:microtubule binding"/>
    <property type="evidence" value="ECO:0000314"/>
    <property type="project" value="UniProtKB"/>
</dbReference>
<dbReference type="GO" id="GO:0042803">
    <property type="term" value="F:protein homodimerization activity"/>
    <property type="evidence" value="ECO:0000314"/>
    <property type="project" value="UniProtKB"/>
</dbReference>
<dbReference type="GO" id="GO:0032053">
    <property type="term" value="P:ciliary basal body organization"/>
    <property type="evidence" value="ECO:0000315"/>
    <property type="project" value="UniProtKB"/>
</dbReference>
<dbReference type="GO" id="GO:0007010">
    <property type="term" value="P:cytoskeleton organization"/>
    <property type="evidence" value="ECO:0000315"/>
    <property type="project" value="UniProtKB"/>
</dbReference>
<dbReference type="GO" id="GO:0051302">
    <property type="term" value="P:regulation of cell division"/>
    <property type="evidence" value="ECO:0000315"/>
    <property type="project" value="UniProtKB"/>
</dbReference>
<dbReference type="Gene3D" id="1.10.287.1490">
    <property type="match status" value="2"/>
</dbReference>
<dbReference type="InterPro" id="IPR051877">
    <property type="entry name" value="Centriole_BasalBody_StrucProt"/>
</dbReference>
<dbReference type="PANTHER" id="PTHR20544">
    <property type="entry name" value="CENTROSOMAL PROTEIN CEP135"/>
    <property type="match status" value="1"/>
</dbReference>
<dbReference type="PANTHER" id="PTHR20544:SF0">
    <property type="entry name" value="NUCLEOPROTEIN TPR_MLP1 DOMAIN-CONTAINING PROTEIN"/>
    <property type="match status" value="1"/>
</dbReference>
<sequence length="1640" mass="174638">MAIDVDRTLAVLRRKLEALGYSDPLEPASLQLVQKLVEDLVHTTDSYTAVKQQCAKQAQEIAAFDTRLESVRQDSVRLQSENSQLHVLVMQHAERHEREAREHYTAVKRLEDTIAELSYWKHAAAEKLASADKENAGLRKRCEELAKLTDRLASGAATPQSVAPKISSRSPIRVAPPPSPPRPRQATVDVLQAANGRILSLQRQLADATAELQELRQRVAEDEDQIRRRDVEIDRLGTRAGTDTNVLALRARNEANESMILQLNGTVESLAARVRELEAVEVRCEELQGALRRAEMDRDQAEERYSRSARDHDALSREVLGLRRDLAALQDTNNRAAGLLAADAAGASTPDTTAGAPALRQRLADSRADVERLSGQLAAADMERRNLAQQLSALRSELDDTQFLLAEAQSRAAGLAAAQAVAESEARRLAGEAAAREGRLRELDSQLAVVLSDLEARQAGFAALEKDRAEANARAEELARRLDEVERSAASERAAAAAAQQSVSRLDSELRVVRGSAAALEAEAAALRQELQDVSVGKVRATSALSSTEDEAVRARQQAEALRMQLTAERRAAEELRAGHDTLQLEVDRLGGQLALQQQEAELLRQQLAAARGELAASEAAASGAEQKLSGLGALSQRLEEMGEQARRAQAATAEAEAEAVRLRAAVSEAKEGQARAERGLREARREVEGAREAEALVRAQLREVEAQAEGTSKALKAAEADRDRALMDARLAAGDLASLRDQLAAETSSAADAGSTARQMAARLSAAERAAAAAQEERERAAVAAEEAEAAAAAARGREEEARAQGREWAERARRAEALVAEYEADVAQLRAARDSDAAALRSLEDTVAAARRDLDARRSEVEQLTTLSLRGDATVQEYMANLKAMSTDLRAAEMRAADLAGEAAAAQDAAASWRSEAEQLRGLLRQMDADRDNLQHELDAKAERLVAQEQQLAGAQAAEQEAARLLALAEGRLALTDNRAREGEAEAAAVRAQLAAALDSVRALSGEGEALREELRAVSEDLEALVRENQVVGGELAAVAAQRDSAAEEARRLGGRRASAEQLLRAKEAEAEDLRRVYEALAAEHRRLQGGVGALEREGAMREAALQAKAAEVSSLAESQRAAQATINQYVMDLQAFERQVDSLSRQLSQAEADGEELVRQREALLEEIRAAQQVRLGLERHREELQRQVASLDSQVAIGRARLEDSNSEAASLNQRLAMERSRVAELEGLLAGMRAREFRSDFASDRAGGQLAVMVDRNRALEEQVASLQHQVGALQASREAQDRELSRLRGEALALAASTAASLEGRTAAAGGAAAGAAKDQAAALDRLTSERDAAQDEAARLRGALAAAEAAAASASTAAAVSIPAAGSGSEAAAVLRVRCSELERRNTELMQELRTLQDTCRQQESLLSAAQNELSALQAEHRRLVELVARLDQDKAAAAAEAAAARQQVATATRRVATAEQEAAAGAARLQSQLRDEQGRRRQAERDFLELLSSIEGAGGEAAAAAVAAAHGEGAAELASRRLRELQTQVDALEAEKAGLEEATQRTRATLGAMSGQMAAIQAEYDATNTALAGLAGAMAAGAQGQGQVQGPAGTAPAAAAGAPGPQPGQAQAGGFGGAHGGGSISLSGGPRR</sequence>
<name>BLD10_CHLRE</name>
<feature type="chain" id="PRO_0000459323" description="Basal body protein 10">
    <location>
        <begin position="1"/>
        <end position="1640"/>
    </location>
</feature>
<feature type="region of interest" description="Homodimerization" evidence="9 11">
    <location>
        <begin position="11"/>
        <end position="64"/>
    </location>
</feature>
<feature type="region of interest" description="Disordered" evidence="3">
    <location>
        <begin position="154"/>
        <end position="185"/>
    </location>
</feature>
<feature type="region of interest" description="Disordered" evidence="3">
    <location>
        <begin position="1592"/>
        <end position="1640"/>
    </location>
</feature>
<feature type="coiled-coil region" evidence="2">
    <location>
        <begin position="93"/>
        <end position="148"/>
    </location>
</feature>
<feature type="coiled-coil region" evidence="2">
    <location>
        <begin position="191"/>
        <end position="232"/>
    </location>
</feature>
<feature type="coiled-coil region" evidence="2">
    <location>
        <begin position="260"/>
        <end position="332"/>
    </location>
</feature>
<feature type="coiled-coil region" evidence="2">
    <location>
        <begin position="370"/>
        <end position="411"/>
    </location>
</feature>
<feature type="coiled-coil region" evidence="2">
    <location>
        <begin position="461"/>
        <end position="722"/>
    </location>
</feature>
<feature type="coiled-coil region" evidence="2">
    <location>
        <begin position="758"/>
        <end position="960"/>
    </location>
</feature>
<feature type="coiled-coil region" evidence="2">
    <location>
        <begin position="1010"/>
        <end position="1030"/>
    </location>
</feature>
<feature type="coiled-coil region" evidence="2">
    <location>
        <begin position="1059"/>
        <end position="1086"/>
    </location>
</feature>
<feature type="coiled-coil region" evidence="2">
    <location>
        <begin position="1129"/>
        <end position="1282"/>
    </location>
</feature>
<feature type="coiled-coil region" evidence="2">
    <location>
        <begin position="1323"/>
        <end position="1494"/>
    </location>
</feature>
<feature type="coiled-coil region" evidence="2">
    <location>
        <begin position="1523"/>
        <end position="1557"/>
    </location>
</feature>
<feature type="compositionally biased region" description="Pro residues" evidence="3">
    <location>
        <begin position="174"/>
        <end position="183"/>
    </location>
</feature>
<feature type="compositionally biased region" description="Low complexity" evidence="3">
    <location>
        <begin position="1592"/>
        <end position="1618"/>
    </location>
</feature>
<feature type="compositionally biased region" description="Gly residues" evidence="3">
    <location>
        <begin position="1619"/>
        <end position="1631"/>
    </location>
</feature>
<feature type="site" description="Microtubule binding" evidence="1">
    <location>
        <position position="101"/>
    </location>
</feature>
<feature type="site" description="Microtubule binding" evidence="1">
    <location>
        <position position="108"/>
    </location>
</feature>
<feature type="sequence conflict" description="In Ref. 1; BAD00740." evidence="8" ref="1">
    <original>R</original>
    <variation>L</variation>
    <location>
        <position position="1059"/>
    </location>
</feature>
<feature type="sequence conflict" description="In Ref. 1; BAD00740." evidence="8" ref="1">
    <original>L</original>
    <variation>F</variation>
    <location>
        <position position="1330"/>
    </location>
</feature>
<feature type="helix" evidence="12">
    <location>
        <begin position="2"/>
        <end position="17"/>
    </location>
</feature>
<feature type="strand" evidence="12">
    <location>
        <begin position="18"/>
        <end position="20"/>
    </location>
</feature>
<feature type="helix" evidence="12">
    <location>
        <begin position="27"/>
        <end position="67"/>
    </location>
</feature>